<comment type="function">
    <text evidence="1">Catalyzes the conversion of acetate into acetyl-CoA (AcCoA), an essential intermediate at the junction of anabolic and catabolic pathways. AcsA undergoes a two-step reaction. In the first half reaction, AcsA combines acetate with ATP to form acetyl-adenylate (AcAMP) intermediate. In the second half reaction, it can then transfer the acetyl group from AcAMP to the sulfhydryl group of CoA, forming the product AcCoA.</text>
</comment>
<comment type="catalytic activity">
    <reaction evidence="1">
        <text>acetate + ATP + CoA = acetyl-CoA + AMP + diphosphate</text>
        <dbReference type="Rhea" id="RHEA:23176"/>
        <dbReference type="ChEBI" id="CHEBI:30089"/>
        <dbReference type="ChEBI" id="CHEBI:30616"/>
        <dbReference type="ChEBI" id="CHEBI:33019"/>
        <dbReference type="ChEBI" id="CHEBI:57287"/>
        <dbReference type="ChEBI" id="CHEBI:57288"/>
        <dbReference type="ChEBI" id="CHEBI:456215"/>
        <dbReference type="EC" id="6.2.1.1"/>
    </reaction>
</comment>
<comment type="cofactor">
    <cofactor evidence="1">
        <name>Mg(2+)</name>
        <dbReference type="ChEBI" id="CHEBI:18420"/>
    </cofactor>
</comment>
<comment type="PTM">
    <text evidence="1">Acetylated. Deacetylation by the SIR2-homolog deacetylase activates the enzyme.</text>
</comment>
<comment type="similarity">
    <text evidence="1">Belongs to the ATP-dependent AMP-binding enzyme family.</text>
</comment>
<dbReference type="EC" id="6.2.1.1" evidence="1"/>
<dbReference type="EMBL" id="AE016795">
    <property type="protein sequence ID" value="AAO09694.1"/>
    <property type="molecule type" value="Genomic_DNA"/>
</dbReference>
<dbReference type="RefSeq" id="WP_011079223.1">
    <property type="nucleotide sequence ID" value="NC_004459.3"/>
</dbReference>
<dbReference type="SMR" id="Q8DCZ9"/>
<dbReference type="KEGG" id="vvu:VV1_1237"/>
<dbReference type="HOGENOM" id="CLU_000022_3_6_6"/>
<dbReference type="Proteomes" id="UP000002275">
    <property type="component" value="Chromosome 1"/>
</dbReference>
<dbReference type="GO" id="GO:0005829">
    <property type="term" value="C:cytosol"/>
    <property type="evidence" value="ECO:0007669"/>
    <property type="project" value="TreeGrafter"/>
</dbReference>
<dbReference type="GO" id="GO:0003987">
    <property type="term" value="F:acetate-CoA ligase activity"/>
    <property type="evidence" value="ECO:0007669"/>
    <property type="project" value="UniProtKB-UniRule"/>
</dbReference>
<dbReference type="GO" id="GO:0016208">
    <property type="term" value="F:AMP binding"/>
    <property type="evidence" value="ECO:0007669"/>
    <property type="project" value="InterPro"/>
</dbReference>
<dbReference type="GO" id="GO:0005524">
    <property type="term" value="F:ATP binding"/>
    <property type="evidence" value="ECO:0007669"/>
    <property type="project" value="UniProtKB-KW"/>
</dbReference>
<dbReference type="GO" id="GO:0046872">
    <property type="term" value="F:metal ion binding"/>
    <property type="evidence" value="ECO:0007669"/>
    <property type="project" value="UniProtKB-KW"/>
</dbReference>
<dbReference type="GO" id="GO:0019427">
    <property type="term" value="P:acetyl-CoA biosynthetic process from acetate"/>
    <property type="evidence" value="ECO:0007669"/>
    <property type="project" value="InterPro"/>
</dbReference>
<dbReference type="CDD" id="cd05966">
    <property type="entry name" value="ACS"/>
    <property type="match status" value="1"/>
</dbReference>
<dbReference type="FunFam" id="3.30.300.30:FF:000004">
    <property type="entry name" value="Acetyl-coenzyme A synthetase"/>
    <property type="match status" value="1"/>
</dbReference>
<dbReference type="FunFam" id="3.40.50.12780:FF:000001">
    <property type="entry name" value="Acetyl-coenzyme A synthetase"/>
    <property type="match status" value="1"/>
</dbReference>
<dbReference type="Gene3D" id="3.30.300.30">
    <property type="match status" value="1"/>
</dbReference>
<dbReference type="Gene3D" id="3.40.50.12780">
    <property type="entry name" value="N-terminal domain of ligase-like"/>
    <property type="match status" value="1"/>
</dbReference>
<dbReference type="HAMAP" id="MF_01123">
    <property type="entry name" value="Ac_CoA_synth"/>
    <property type="match status" value="1"/>
</dbReference>
<dbReference type="InterPro" id="IPR011904">
    <property type="entry name" value="Ac_CoA_lig"/>
</dbReference>
<dbReference type="InterPro" id="IPR032387">
    <property type="entry name" value="ACAS_N"/>
</dbReference>
<dbReference type="InterPro" id="IPR025110">
    <property type="entry name" value="AMP-bd_C"/>
</dbReference>
<dbReference type="InterPro" id="IPR045851">
    <property type="entry name" value="AMP-bd_C_sf"/>
</dbReference>
<dbReference type="InterPro" id="IPR020845">
    <property type="entry name" value="AMP-binding_CS"/>
</dbReference>
<dbReference type="InterPro" id="IPR000873">
    <property type="entry name" value="AMP-dep_synth/lig_dom"/>
</dbReference>
<dbReference type="InterPro" id="IPR042099">
    <property type="entry name" value="ANL_N_sf"/>
</dbReference>
<dbReference type="NCBIfam" id="TIGR02188">
    <property type="entry name" value="Ac_CoA_lig_AcsA"/>
    <property type="match status" value="1"/>
</dbReference>
<dbReference type="NCBIfam" id="NF001208">
    <property type="entry name" value="PRK00174.1"/>
    <property type="match status" value="1"/>
</dbReference>
<dbReference type="PANTHER" id="PTHR24095">
    <property type="entry name" value="ACETYL-COENZYME A SYNTHETASE"/>
    <property type="match status" value="1"/>
</dbReference>
<dbReference type="PANTHER" id="PTHR24095:SF243">
    <property type="entry name" value="ACETYL-COENZYME A SYNTHETASE"/>
    <property type="match status" value="1"/>
</dbReference>
<dbReference type="Pfam" id="PF16177">
    <property type="entry name" value="ACAS_N"/>
    <property type="match status" value="1"/>
</dbReference>
<dbReference type="Pfam" id="PF00501">
    <property type="entry name" value="AMP-binding"/>
    <property type="match status" value="1"/>
</dbReference>
<dbReference type="Pfam" id="PF13193">
    <property type="entry name" value="AMP-binding_C"/>
    <property type="match status" value="1"/>
</dbReference>
<dbReference type="SUPFAM" id="SSF56801">
    <property type="entry name" value="Acetyl-CoA synthetase-like"/>
    <property type="match status" value="1"/>
</dbReference>
<dbReference type="PROSITE" id="PS00455">
    <property type="entry name" value="AMP_BINDING"/>
    <property type="match status" value="1"/>
</dbReference>
<name>ACSA_VIBVU</name>
<evidence type="ECO:0000255" key="1">
    <source>
        <dbReference type="HAMAP-Rule" id="MF_01123"/>
    </source>
</evidence>
<protein>
    <recommendedName>
        <fullName evidence="1">Acetyl-coenzyme A synthetase</fullName>
        <shortName evidence="1">AcCoA synthetase</shortName>
        <shortName evidence="1">Acs</shortName>
        <ecNumber evidence="1">6.2.1.1</ecNumber>
    </recommendedName>
    <alternativeName>
        <fullName evidence="1">Acetate--CoA ligase</fullName>
    </alternativeName>
    <alternativeName>
        <fullName evidence="1">Acyl-activating enzyme</fullName>
    </alternativeName>
</protein>
<keyword id="KW-0007">Acetylation</keyword>
<keyword id="KW-0067">ATP-binding</keyword>
<keyword id="KW-0436">Ligase</keyword>
<keyword id="KW-0460">Magnesium</keyword>
<keyword id="KW-0479">Metal-binding</keyword>
<keyword id="KW-0547">Nucleotide-binding</keyword>
<organism>
    <name type="scientific">Vibrio vulnificus (strain CMCP6)</name>
    <dbReference type="NCBI Taxonomy" id="216895"/>
    <lineage>
        <taxon>Bacteria</taxon>
        <taxon>Pseudomonadati</taxon>
        <taxon>Pseudomonadota</taxon>
        <taxon>Gammaproteobacteria</taxon>
        <taxon>Vibrionales</taxon>
        <taxon>Vibrionaceae</taxon>
        <taxon>Vibrio</taxon>
    </lineage>
</organism>
<reference key="1">
    <citation type="submission" date="2002-12" db="EMBL/GenBank/DDBJ databases">
        <title>Complete genome sequence of Vibrio vulnificus CMCP6.</title>
        <authorList>
            <person name="Rhee J.H."/>
            <person name="Kim S.Y."/>
            <person name="Chung S.S."/>
            <person name="Kim J.J."/>
            <person name="Moon Y.H."/>
            <person name="Jeong H."/>
            <person name="Choy H.E."/>
        </authorList>
    </citation>
    <scope>NUCLEOTIDE SEQUENCE [LARGE SCALE GENOMIC DNA]</scope>
    <source>
        <strain>CMCP6</strain>
    </source>
</reference>
<sequence>MSEAHIYPVKENIKAHTHADNDTYLAMYQQSVTDPERFWSEHGKIVDWIKPFTKVKQTSFDTGHVDIRWFEDGTLNVSANCIDRHLAERGDDVAIIWEGDNPEDDKTLTYNELYTEVCRFSNALKEQGVRKGDVVCLYMPMVPEAAVAMLACTRIGAVHTIVFGGFSPEALAGRIIDSDAKVVITADEGVRGGRAVPLKKNVDEALTNPEVKTISKVVVFKRTGGNIDWHEHRDVWWHEATAKVSDVCPPEEMKAEDPLFILYTSGSTGKPKGVLHTTGGYLVYATMTFKYVFDYQPGETFWCTADVGWITGHTYLVYGPLANGAKTILFEGVPNYPNTSRMSEVVDKHQVNILYTAPTAIRALMAKGNEAIEGTDRSSLRIMGSVGEPINPEAWEWYYKTIGNEKSPIVDTWWQTETGGILITPLPGATALKPGSATRPFFGVQPALVDNMGNVIEDQAAEGNLVILDSWPGQMRTVYGDHERFEQTYFSTFKGMYFTGDGARRDEDGYYWITGRVDDVLNVSGHRMGTAEIESALVAHPKIAEAAIVGIPHDIKGQAIYAYVTLNAGEYPTAELHKEVKDWVRKEIGPIATPDVLHWTDALPKTRSGKIMRRILRKIATGDTSNLGDTSTLADPSVVDKLIAEKAELV</sequence>
<gene>
    <name evidence="1" type="primary">acsA</name>
    <name type="ordered locus">VV1_1237</name>
</gene>
<accession>Q8DCZ9</accession>
<proteinExistence type="inferred from homology"/>
<feature type="chain" id="PRO_0000208394" description="Acetyl-coenzyme A synthetase">
    <location>
        <begin position="1"/>
        <end position="650"/>
    </location>
</feature>
<feature type="binding site" evidence="1">
    <location>
        <begin position="191"/>
        <end position="194"/>
    </location>
    <ligand>
        <name>CoA</name>
        <dbReference type="ChEBI" id="CHEBI:57287"/>
    </ligand>
</feature>
<feature type="binding site" evidence="1">
    <location>
        <position position="311"/>
    </location>
    <ligand>
        <name>CoA</name>
        <dbReference type="ChEBI" id="CHEBI:57287"/>
    </ligand>
</feature>
<feature type="binding site" evidence="1">
    <location>
        <position position="335"/>
    </location>
    <ligand>
        <name>CoA</name>
        <dbReference type="ChEBI" id="CHEBI:57287"/>
    </ligand>
</feature>
<feature type="binding site" evidence="1">
    <location>
        <begin position="387"/>
        <end position="389"/>
    </location>
    <ligand>
        <name>ATP</name>
        <dbReference type="ChEBI" id="CHEBI:30616"/>
    </ligand>
</feature>
<feature type="binding site" evidence="1">
    <location>
        <begin position="411"/>
        <end position="416"/>
    </location>
    <ligand>
        <name>ATP</name>
        <dbReference type="ChEBI" id="CHEBI:30616"/>
    </ligand>
</feature>
<feature type="binding site" evidence="1">
    <location>
        <position position="501"/>
    </location>
    <ligand>
        <name>ATP</name>
        <dbReference type="ChEBI" id="CHEBI:30616"/>
    </ligand>
</feature>
<feature type="binding site" evidence="1">
    <location>
        <position position="516"/>
    </location>
    <ligand>
        <name>ATP</name>
        <dbReference type="ChEBI" id="CHEBI:30616"/>
    </ligand>
</feature>
<feature type="binding site" evidence="1">
    <location>
        <position position="524"/>
    </location>
    <ligand>
        <name>CoA</name>
        <dbReference type="ChEBI" id="CHEBI:57287"/>
    </ligand>
</feature>
<feature type="binding site" evidence="1">
    <location>
        <position position="527"/>
    </location>
    <ligand>
        <name>ATP</name>
        <dbReference type="ChEBI" id="CHEBI:30616"/>
    </ligand>
</feature>
<feature type="binding site" evidence="1">
    <location>
        <position position="538"/>
    </location>
    <ligand>
        <name>Mg(2+)</name>
        <dbReference type="ChEBI" id="CHEBI:18420"/>
    </ligand>
</feature>
<feature type="binding site" evidence="1">
    <location>
        <position position="540"/>
    </location>
    <ligand>
        <name>Mg(2+)</name>
        <dbReference type="ChEBI" id="CHEBI:18420"/>
    </ligand>
</feature>
<feature type="binding site" evidence="1">
    <location>
        <position position="543"/>
    </location>
    <ligand>
        <name>Mg(2+)</name>
        <dbReference type="ChEBI" id="CHEBI:18420"/>
    </ligand>
</feature>
<feature type="binding site" evidence="1">
    <location>
        <position position="585"/>
    </location>
    <ligand>
        <name>CoA</name>
        <dbReference type="ChEBI" id="CHEBI:57287"/>
    </ligand>
</feature>
<feature type="modified residue" description="N6-acetyllysine" evidence="1">
    <location>
        <position position="610"/>
    </location>
</feature>